<organism>
    <name type="scientific">Beauveria bassiana (strain ARSEF 2860)</name>
    <name type="common">White muscardine disease fungus</name>
    <name type="synonym">Tritirachium shiotae</name>
    <dbReference type="NCBI Taxonomy" id="655819"/>
    <lineage>
        <taxon>Eukaryota</taxon>
        <taxon>Fungi</taxon>
        <taxon>Dikarya</taxon>
        <taxon>Ascomycota</taxon>
        <taxon>Pezizomycotina</taxon>
        <taxon>Sordariomycetes</taxon>
        <taxon>Hypocreomycetidae</taxon>
        <taxon>Hypocreales</taxon>
        <taxon>Cordycipitaceae</taxon>
        <taxon>Beauveria</taxon>
    </lineage>
</organism>
<sequence>MARHKTSDIMLPAAWRIPWDRQLDQHMARVIKAMAQINFASNMHHNLFMFTTREGLLHRNRMLSSSTTQELQSTQPIAVRQQPRAARACGFGDRDRRVIDPPPIVQLRIDGPGLSEEERRAYLRYPNYVMNCSIWDESGTRDASYMPDEYNHQRRLMGSLVGTPFVGDDDQNQEGCFFCFSDLSCRTPGAFRLKFTLIMIDPARASILRHFPTLTEIKTDIFQVYSAKEFPGMVASSSLAKKLKEQGCIISIKKGNERARPRGADGRSDDEDD</sequence>
<proteinExistence type="evidence at transcript level"/>
<evidence type="ECO:0000250" key="1">
    <source>
        <dbReference type="UniProtKB" id="M2TGT8"/>
    </source>
</evidence>
<evidence type="ECO:0000250" key="2">
    <source>
        <dbReference type="UniProtKB" id="Q5BBX1"/>
    </source>
</evidence>
<evidence type="ECO:0000255" key="3">
    <source>
        <dbReference type="PROSITE-ProRule" id="PRU01165"/>
    </source>
</evidence>
<evidence type="ECO:0000256" key="4">
    <source>
        <dbReference type="SAM" id="MobiDB-lite"/>
    </source>
</evidence>
<evidence type="ECO:0000269" key="5">
    <source>
    </source>
</evidence>
<evidence type="ECO:0000303" key="6">
    <source>
    </source>
</evidence>
<evidence type="ECO:0000305" key="7"/>
<keyword id="KW-0539">Nucleus</keyword>
<keyword id="KW-1185">Reference proteome</keyword>
<keyword id="KW-0749">Sporulation</keyword>
<keyword id="KW-0804">Transcription</keyword>
<keyword id="KW-0805">Transcription regulation</keyword>
<comment type="function">
    <text evidence="2 5">Component of the velB-vosA heterodimeric complex that plays a dual role in activating genes associated with spore maturation and repressing certain development-associated genes (PubMed:26243054). The complex binds DNA through the DNA-binding domain of vosA that recognizes an 11-nucleotide consensus sequence 5'-CTGGCCGCGGC-3' consisting of two motifs in the promoters of key developmental regulatory genes (By similarity). Positively regulates the expression of wetA and represses abaA and brlA (PubMed:26243054). Acts as a crucial regulator of both conidiation capacity and conidial quality (PubMed:26243054). Responsible for the synthesis and accumulation of intracellular trehalose (PubMed:26243054).</text>
</comment>
<comment type="subunit">
    <text evidence="2">Forms a heterodimeric complex with velB; the formation of the velB-vosA complex is light-dependent (By similarity).</text>
</comment>
<comment type="subcellular location">
    <subcellularLocation>
        <location evidence="2">Nucleus</location>
    </subcellularLocation>
</comment>
<comment type="induction">
    <text evidence="5">Expression is positively regulated by wetA and brlA (PubMed:26243054).</text>
</comment>
<comment type="domain">
    <text evidence="2">The N-terminal velvet domain contains a NF-kappa-B-like fold and is involved in DNA-binding (By similarity).</text>
</comment>
<comment type="disruption phenotype">
    <text evidence="5">Decreases expression of wetA and affects expression of abaA and brlA (PubMed:26243054). Leads to loss of conidiation capacities and defects in conidial tolerance to high osmolarity or UV-B irradiation but no change in conidial sensitivity to H(2)O(2) or the fungicide carbendazim (PubMed:26243054).</text>
</comment>
<comment type="similarity">
    <text evidence="7">Belongs to the velvet family. VosA subfamily.</text>
</comment>
<gene>
    <name evidence="6" type="primary">vosA</name>
    <name type="ORF">BBA_01023</name>
</gene>
<name>VOSA_BEAB2</name>
<dbReference type="EMBL" id="JH725151">
    <property type="protein sequence ID" value="EJP70154.1"/>
    <property type="molecule type" value="Genomic_DNA"/>
</dbReference>
<dbReference type="RefSeq" id="XP_008594342.1">
    <property type="nucleotide sequence ID" value="XM_008596120.1"/>
</dbReference>
<dbReference type="SMR" id="J4KR13"/>
<dbReference type="STRING" id="655819.J4KR13"/>
<dbReference type="GeneID" id="19884035"/>
<dbReference type="HOGENOM" id="CLU_022491_1_1_1"/>
<dbReference type="InParanoid" id="J4KR13"/>
<dbReference type="OrthoDB" id="12638at474943"/>
<dbReference type="PHI-base" id="PHI:5055"/>
<dbReference type="Proteomes" id="UP000002762">
    <property type="component" value="Unassembled WGS sequence"/>
</dbReference>
<dbReference type="GO" id="GO:0005634">
    <property type="term" value="C:nucleus"/>
    <property type="evidence" value="ECO:0007669"/>
    <property type="project" value="UniProtKB-SubCell"/>
</dbReference>
<dbReference type="GO" id="GO:0030435">
    <property type="term" value="P:sporulation resulting in formation of a cellular spore"/>
    <property type="evidence" value="ECO:0007669"/>
    <property type="project" value="UniProtKB-KW"/>
</dbReference>
<dbReference type="Gene3D" id="2.60.40.3960">
    <property type="entry name" value="Velvet domain"/>
    <property type="match status" value="1"/>
</dbReference>
<dbReference type="InterPro" id="IPR021740">
    <property type="entry name" value="Velvet"/>
</dbReference>
<dbReference type="InterPro" id="IPR037525">
    <property type="entry name" value="Velvet_dom"/>
</dbReference>
<dbReference type="InterPro" id="IPR038491">
    <property type="entry name" value="Velvet_dom_sf"/>
</dbReference>
<dbReference type="PANTHER" id="PTHR33572:SF17">
    <property type="entry name" value="SEXUAL DEVELOPMENT REGULATOR VELC"/>
    <property type="match status" value="1"/>
</dbReference>
<dbReference type="PANTHER" id="PTHR33572">
    <property type="entry name" value="SPORE DEVELOPMENT REGULATOR VOSA"/>
    <property type="match status" value="1"/>
</dbReference>
<dbReference type="Pfam" id="PF11754">
    <property type="entry name" value="Velvet"/>
    <property type="match status" value="2"/>
</dbReference>
<dbReference type="PROSITE" id="PS51821">
    <property type="entry name" value="VELVET"/>
    <property type="match status" value="1"/>
</dbReference>
<feature type="chain" id="PRO_0000435917" description="Spore development regulator vosA">
    <location>
        <begin position="1"/>
        <end position="273"/>
    </location>
</feature>
<feature type="domain" description="Velvet" evidence="3">
    <location>
        <begin position="70"/>
        <end position="253"/>
    </location>
</feature>
<feature type="region of interest" description="Disordered" evidence="4">
    <location>
        <begin position="66"/>
        <end position="86"/>
    </location>
</feature>
<feature type="region of interest" description="Disordered" evidence="4">
    <location>
        <begin position="254"/>
        <end position="273"/>
    </location>
</feature>
<feature type="short sequence motif" description="Nuclear localization signal" evidence="1">
    <location>
        <begin position="211"/>
        <end position="218"/>
    </location>
</feature>
<feature type="compositionally biased region" description="Low complexity" evidence="4">
    <location>
        <begin position="66"/>
        <end position="75"/>
    </location>
</feature>
<feature type="compositionally biased region" description="Basic and acidic residues" evidence="4">
    <location>
        <begin position="254"/>
        <end position="267"/>
    </location>
</feature>
<accession>J4KR13</accession>
<protein>
    <recommendedName>
        <fullName evidence="7">Spore development regulator vosA</fullName>
    </recommendedName>
</protein>
<reference key="1">
    <citation type="journal article" date="2012" name="Sci. Rep.">
        <title>Genomic perspectives on the evolution of fungal entomopathogenicity in Beauveria bassiana.</title>
        <authorList>
            <person name="Xiao G."/>
            <person name="Ying S.-H."/>
            <person name="Zheng P."/>
            <person name="Wang Z.-L."/>
            <person name="Zhang S."/>
            <person name="Xie X.-Q."/>
            <person name="Shang Y."/>
            <person name="St Leger R.J."/>
            <person name="Zhao G.-P."/>
            <person name="Wang C."/>
            <person name="Feng M.-G."/>
        </authorList>
    </citation>
    <scope>NUCLEOTIDE SEQUENCE [LARGE SCALE GENOMIC DNA]</scope>
    <source>
        <strain>ARSEF 2860</strain>
    </source>
</reference>
<reference key="2">
    <citation type="journal article" date="2015" name="Appl. Microbiol. Biotechnol.">
        <title>WetA and VosA are distinct regulators of conidiation capacity, conidial quality, and biological control potential of a fungal insect pathogen.</title>
        <authorList>
            <person name="Li F."/>
            <person name="Shi H.Q."/>
            <person name="Ying S.H."/>
            <person name="Feng M.G."/>
        </authorList>
    </citation>
    <scope>FUNCTION</scope>
    <scope>DISRUPTION PHENOTYPE</scope>
    <scope>INDUCTION</scope>
</reference>